<protein>
    <recommendedName>
        <fullName evidence="1">Ribosomal RNA small subunit methyltransferase H</fullName>
        <ecNumber evidence="1">2.1.1.199</ecNumber>
    </recommendedName>
    <alternativeName>
        <fullName evidence="1">16S rRNA m(4)C1402 methyltransferase</fullName>
    </alternativeName>
    <alternativeName>
        <fullName evidence="1">rRNA (cytosine-N(4)-)-methyltransferase RsmH</fullName>
    </alternativeName>
</protein>
<comment type="function">
    <text evidence="1">Specifically methylates the N4 position of cytidine in position 1402 (C1402) of 16S rRNA.</text>
</comment>
<comment type="catalytic activity">
    <reaction evidence="1">
        <text>cytidine(1402) in 16S rRNA + S-adenosyl-L-methionine = N(4)-methylcytidine(1402) in 16S rRNA + S-adenosyl-L-homocysteine + H(+)</text>
        <dbReference type="Rhea" id="RHEA:42928"/>
        <dbReference type="Rhea" id="RHEA-COMP:10286"/>
        <dbReference type="Rhea" id="RHEA-COMP:10287"/>
        <dbReference type="ChEBI" id="CHEBI:15378"/>
        <dbReference type="ChEBI" id="CHEBI:57856"/>
        <dbReference type="ChEBI" id="CHEBI:59789"/>
        <dbReference type="ChEBI" id="CHEBI:74506"/>
        <dbReference type="ChEBI" id="CHEBI:82748"/>
        <dbReference type="EC" id="2.1.1.199"/>
    </reaction>
</comment>
<comment type="subcellular location">
    <subcellularLocation>
        <location evidence="1">Cytoplasm</location>
    </subcellularLocation>
</comment>
<comment type="similarity">
    <text evidence="1">Belongs to the methyltransferase superfamily. RsmH family.</text>
</comment>
<name>RSMH_SYNJB</name>
<sequence>MQILNFVAAEIEPPQTVLGKVYQHDSVLTEEVMAYLQPQGGGIFLDVTLGGGGHSLALLRGGAARVVGLDRDPAALQAAQARFAAEGIPGSRIQLWHLNFADFDLQQHGFRDEQGQGIPFDGIVADLGVSSPQLDCPERGFSFRGEGPLDMRMDPSAAQETAADWVNHRPVEELIEIFTRYGEERFARRIAHHIEQARPLATTTQLAQVVWQAVPPAARRGRIHPATRVFQALRIAVNRELEALETLLAQAPTWLKPGGRLAVISFHSLEDRLVKWAFRRDPRWQVLTPKPLSPSELERQRNPRARSAKLRVAARSSQM</sequence>
<gene>
    <name evidence="1" type="primary">rsmH</name>
    <name type="synonym">mraW</name>
    <name type="ordered locus">CYB_1327</name>
</gene>
<reference key="1">
    <citation type="journal article" date="2007" name="ISME J.">
        <title>Population level functional diversity in a microbial community revealed by comparative genomic and metagenomic analyses.</title>
        <authorList>
            <person name="Bhaya D."/>
            <person name="Grossman A.R."/>
            <person name="Steunou A.-S."/>
            <person name="Khuri N."/>
            <person name="Cohan F.M."/>
            <person name="Hamamura N."/>
            <person name="Melendrez M.C."/>
            <person name="Bateson M.M."/>
            <person name="Ward D.M."/>
            <person name="Heidelberg J.F."/>
        </authorList>
    </citation>
    <scope>NUCLEOTIDE SEQUENCE [LARGE SCALE GENOMIC DNA]</scope>
    <source>
        <strain>JA-2-3B'a(2-13)</strain>
    </source>
</reference>
<keyword id="KW-0963">Cytoplasm</keyword>
<keyword id="KW-0489">Methyltransferase</keyword>
<keyword id="KW-1185">Reference proteome</keyword>
<keyword id="KW-0698">rRNA processing</keyword>
<keyword id="KW-0949">S-adenosyl-L-methionine</keyword>
<keyword id="KW-0808">Transferase</keyword>
<proteinExistence type="inferred from homology"/>
<feature type="chain" id="PRO_0000387182" description="Ribosomal RNA small subunit methyltransferase H">
    <location>
        <begin position="1"/>
        <end position="319"/>
    </location>
</feature>
<feature type="region of interest" description="Disordered" evidence="2">
    <location>
        <begin position="289"/>
        <end position="319"/>
    </location>
</feature>
<feature type="binding site" evidence="1">
    <location>
        <begin position="52"/>
        <end position="54"/>
    </location>
    <ligand>
        <name>S-adenosyl-L-methionine</name>
        <dbReference type="ChEBI" id="CHEBI:59789"/>
    </ligand>
</feature>
<feature type="binding site" evidence="1">
    <location>
        <position position="70"/>
    </location>
    <ligand>
        <name>S-adenosyl-L-methionine</name>
        <dbReference type="ChEBI" id="CHEBI:59789"/>
    </ligand>
</feature>
<feature type="binding site" evidence="1">
    <location>
        <position position="100"/>
    </location>
    <ligand>
        <name>S-adenosyl-L-methionine</name>
        <dbReference type="ChEBI" id="CHEBI:59789"/>
    </ligand>
</feature>
<feature type="binding site" evidence="1">
    <location>
        <position position="126"/>
    </location>
    <ligand>
        <name>S-adenosyl-L-methionine</name>
        <dbReference type="ChEBI" id="CHEBI:59789"/>
    </ligand>
</feature>
<feature type="binding site" evidence="1">
    <location>
        <position position="133"/>
    </location>
    <ligand>
        <name>S-adenosyl-L-methionine</name>
        <dbReference type="ChEBI" id="CHEBI:59789"/>
    </ligand>
</feature>
<accession>Q2JLV1</accession>
<dbReference type="EC" id="2.1.1.199" evidence="1"/>
<dbReference type="EMBL" id="CP000240">
    <property type="protein sequence ID" value="ABD02300.1"/>
    <property type="molecule type" value="Genomic_DNA"/>
</dbReference>
<dbReference type="SMR" id="Q2JLV1"/>
<dbReference type="STRING" id="321332.CYB_1327"/>
<dbReference type="KEGG" id="cyb:CYB_1327"/>
<dbReference type="eggNOG" id="COG0275">
    <property type="taxonomic scope" value="Bacteria"/>
</dbReference>
<dbReference type="HOGENOM" id="CLU_038422_3_0_3"/>
<dbReference type="OrthoDB" id="9806637at2"/>
<dbReference type="Proteomes" id="UP000001938">
    <property type="component" value="Chromosome"/>
</dbReference>
<dbReference type="GO" id="GO:0005737">
    <property type="term" value="C:cytoplasm"/>
    <property type="evidence" value="ECO:0007669"/>
    <property type="project" value="UniProtKB-SubCell"/>
</dbReference>
<dbReference type="GO" id="GO:0071424">
    <property type="term" value="F:rRNA (cytosine-N4-)-methyltransferase activity"/>
    <property type="evidence" value="ECO:0007669"/>
    <property type="project" value="UniProtKB-UniRule"/>
</dbReference>
<dbReference type="GO" id="GO:0070475">
    <property type="term" value="P:rRNA base methylation"/>
    <property type="evidence" value="ECO:0007669"/>
    <property type="project" value="UniProtKB-UniRule"/>
</dbReference>
<dbReference type="CDD" id="cd02440">
    <property type="entry name" value="AdoMet_MTases"/>
    <property type="match status" value="1"/>
</dbReference>
<dbReference type="Gene3D" id="1.10.150.170">
    <property type="entry name" value="Putative methyltransferase TM0872, insert domain"/>
    <property type="match status" value="1"/>
</dbReference>
<dbReference type="Gene3D" id="3.40.50.150">
    <property type="entry name" value="Vaccinia Virus protein VP39"/>
    <property type="match status" value="1"/>
</dbReference>
<dbReference type="HAMAP" id="MF_01007">
    <property type="entry name" value="16SrRNA_methyltr_H"/>
    <property type="match status" value="1"/>
</dbReference>
<dbReference type="InterPro" id="IPR002903">
    <property type="entry name" value="RsmH"/>
</dbReference>
<dbReference type="InterPro" id="IPR023397">
    <property type="entry name" value="SAM-dep_MeTrfase_MraW_recog"/>
</dbReference>
<dbReference type="InterPro" id="IPR029063">
    <property type="entry name" value="SAM-dependent_MTases_sf"/>
</dbReference>
<dbReference type="NCBIfam" id="TIGR00006">
    <property type="entry name" value="16S rRNA (cytosine(1402)-N(4))-methyltransferase RsmH"/>
    <property type="match status" value="1"/>
</dbReference>
<dbReference type="PANTHER" id="PTHR11265:SF0">
    <property type="entry name" value="12S RRNA N4-METHYLCYTIDINE METHYLTRANSFERASE"/>
    <property type="match status" value="1"/>
</dbReference>
<dbReference type="PANTHER" id="PTHR11265">
    <property type="entry name" value="S-ADENOSYL-METHYLTRANSFERASE MRAW"/>
    <property type="match status" value="1"/>
</dbReference>
<dbReference type="Pfam" id="PF01795">
    <property type="entry name" value="Methyltransf_5"/>
    <property type="match status" value="1"/>
</dbReference>
<dbReference type="PIRSF" id="PIRSF004486">
    <property type="entry name" value="MraW"/>
    <property type="match status" value="1"/>
</dbReference>
<dbReference type="SUPFAM" id="SSF81799">
    <property type="entry name" value="Putative methyltransferase TM0872, insert domain"/>
    <property type="match status" value="1"/>
</dbReference>
<dbReference type="SUPFAM" id="SSF53335">
    <property type="entry name" value="S-adenosyl-L-methionine-dependent methyltransferases"/>
    <property type="match status" value="1"/>
</dbReference>
<organism>
    <name type="scientific">Synechococcus sp. (strain JA-2-3B'a(2-13))</name>
    <name type="common">Cyanobacteria bacterium Yellowstone B-Prime</name>
    <dbReference type="NCBI Taxonomy" id="321332"/>
    <lineage>
        <taxon>Bacteria</taxon>
        <taxon>Bacillati</taxon>
        <taxon>Cyanobacteriota</taxon>
        <taxon>Cyanophyceae</taxon>
        <taxon>Synechococcales</taxon>
        <taxon>Synechococcaceae</taxon>
        <taxon>Synechococcus</taxon>
    </lineage>
</organism>
<evidence type="ECO:0000255" key="1">
    <source>
        <dbReference type="HAMAP-Rule" id="MF_01007"/>
    </source>
</evidence>
<evidence type="ECO:0000256" key="2">
    <source>
        <dbReference type="SAM" id="MobiDB-lite"/>
    </source>
</evidence>